<geneLocation type="chloroplast"/>
<protein>
    <recommendedName>
        <fullName evidence="2">Large ribosomal subunit protein uL22c</fullName>
    </recommendedName>
    <alternativeName>
        <fullName>50S ribosomal protein L22, chloroplastic</fullName>
    </alternativeName>
</protein>
<organism>
    <name type="scientific">Draba nemorosa</name>
    <name type="common">Woodland whitlowgrass</name>
    <dbReference type="NCBI Taxonomy" id="171822"/>
    <lineage>
        <taxon>Eukaryota</taxon>
        <taxon>Viridiplantae</taxon>
        <taxon>Streptophyta</taxon>
        <taxon>Embryophyta</taxon>
        <taxon>Tracheophyta</taxon>
        <taxon>Spermatophyta</taxon>
        <taxon>Magnoliopsida</taxon>
        <taxon>eudicotyledons</taxon>
        <taxon>Gunneridae</taxon>
        <taxon>Pentapetalae</taxon>
        <taxon>rosids</taxon>
        <taxon>malvids</taxon>
        <taxon>Brassicales</taxon>
        <taxon>Brassicaceae</taxon>
        <taxon>Arabideae</taxon>
        <taxon>Draba</taxon>
    </lineage>
</organism>
<accession>A4QL58</accession>
<feature type="chain" id="PRO_0000354572" description="Large ribosomal subunit protein uL22c">
    <location>
        <begin position="1"/>
        <end position="160"/>
    </location>
</feature>
<gene>
    <name type="primary">rpl22</name>
</gene>
<dbReference type="EMBL" id="AP009373">
    <property type="protein sequence ID" value="BAF50413.1"/>
    <property type="molecule type" value="Genomic_DNA"/>
</dbReference>
<dbReference type="RefSeq" id="YP_001123589.1">
    <property type="nucleotide sequence ID" value="NC_009272.1"/>
</dbReference>
<dbReference type="SMR" id="A4QL58"/>
<dbReference type="GeneID" id="4964761"/>
<dbReference type="GO" id="GO:0009507">
    <property type="term" value="C:chloroplast"/>
    <property type="evidence" value="ECO:0007669"/>
    <property type="project" value="UniProtKB-SubCell"/>
</dbReference>
<dbReference type="GO" id="GO:0015934">
    <property type="term" value="C:large ribosomal subunit"/>
    <property type="evidence" value="ECO:0007669"/>
    <property type="project" value="InterPro"/>
</dbReference>
<dbReference type="GO" id="GO:0019843">
    <property type="term" value="F:rRNA binding"/>
    <property type="evidence" value="ECO:0007669"/>
    <property type="project" value="UniProtKB-UniRule"/>
</dbReference>
<dbReference type="GO" id="GO:0003735">
    <property type="term" value="F:structural constituent of ribosome"/>
    <property type="evidence" value="ECO:0007669"/>
    <property type="project" value="InterPro"/>
</dbReference>
<dbReference type="GO" id="GO:0006412">
    <property type="term" value="P:translation"/>
    <property type="evidence" value="ECO:0007669"/>
    <property type="project" value="UniProtKB-UniRule"/>
</dbReference>
<dbReference type="CDD" id="cd00336">
    <property type="entry name" value="Ribosomal_L22"/>
    <property type="match status" value="1"/>
</dbReference>
<dbReference type="FunFam" id="3.90.470.10:FF:000006">
    <property type="entry name" value="50S ribosomal protein L22, chloroplastic"/>
    <property type="match status" value="1"/>
</dbReference>
<dbReference type="Gene3D" id="3.90.470.10">
    <property type="entry name" value="Ribosomal protein L22/L17"/>
    <property type="match status" value="1"/>
</dbReference>
<dbReference type="HAMAP" id="MF_01331_B">
    <property type="entry name" value="Ribosomal_uL22_B"/>
    <property type="match status" value="1"/>
</dbReference>
<dbReference type="InterPro" id="IPR001063">
    <property type="entry name" value="Ribosomal_uL22"/>
</dbReference>
<dbReference type="InterPro" id="IPR005727">
    <property type="entry name" value="Ribosomal_uL22_bac/chlpt-type"/>
</dbReference>
<dbReference type="InterPro" id="IPR047867">
    <property type="entry name" value="Ribosomal_uL22_bac/org-type"/>
</dbReference>
<dbReference type="InterPro" id="IPR018260">
    <property type="entry name" value="Ribosomal_uL22_CS"/>
</dbReference>
<dbReference type="InterPro" id="IPR036394">
    <property type="entry name" value="Ribosomal_uL22_sf"/>
</dbReference>
<dbReference type="NCBIfam" id="TIGR01044">
    <property type="entry name" value="rplV_bact"/>
    <property type="match status" value="1"/>
</dbReference>
<dbReference type="PANTHER" id="PTHR13501">
    <property type="entry name" value="CHLOROPLAST 50S RIBOSOMAL PROTEIN L22-RELATED"/>
    <property type="match status" value="1"/>
</dbReference>
<dbReference type="PANTHER" id="PTHR13501:SF10">
    <property type="entry name" value="LARGE RIBOSOMAL SUBUNIT PROTEIN UL22M"/>
    <property type="match status" value="1"/>
</dbReference>
<dbReference type="Pfam" id="PF00237">
    <property type="entry name" value="Ribosomal_L22"/>
    <property type="match status" value="1"/>
</dbReference>
<dbReference type="SUPFAM" id="SSF54843">
    <property type="entry name" value="Ribosomal protein L22"/>
    <property type="match status" value="1"/>
</dbReference>
<dbReference type="PROSITE" id="PS00464">
    <property type="entry name" value="RIBOSOMAL_L22"/>
    <property type="match status" value="1"/>
</dbReference>
<comment type="function">
    <text evidence="1">This protein binds specifically to 23S rRNA.</text>
</comment>
<comment type="function">
    <text evidence="1">The globular domain of the protein is located near the polypeptide exit tunnel on the outside of the subunit, while an extended beta-hairpin is found that lines the wall of the exit tunnel in the center of the 70S ribosome.</text>
</comment>
<comment type="subunit">
    <text evidence="1">Part of the 50S ribosomal subunit.</text>
</comment>
<comment type="subcellular location">
    <subcellularLocation>
        <location>Plastid</location>
        <location>Chloroplast</location>
    </subcellularLocation>
</comment>
<comment type="similarity">
    <text evidence="2">Belongs to the universal ribosomal protein uL22 family.</text>
</comment>
<keyword id="KW-0150">Chloroplast</keyword>
<keyword id="KW-0934">Plastid</keyword>
<keyword id="KW-0687">Ribonucleoprotein</keyword>
<keyword id="KW-0689">Ribosomal protein</keyword>
<keyword id="KW-0694">RNA-binding</keyword>
<keyword id="KW-0699">rRNA-binding</keyword>
<reference key="1">
    <citation type="submission" date="2007-03" db="EMBL/GenBank/DDBJ databases">
        <title>Sequencing analysis of Draba nemoroza chloroplast DNA.</title>
        <authorList>
            <person name="Hosouchi T."/>
            <person name="Tsuruoka H."/>
            <person name="Kotani H."/>
        </authorList>
    </citation>
    <scope>NUCLEOTIDE SEQUENCE [LARGE SCALE GENOMIC DNA]</scope>
</reference>
<name>RK22_DRANE</name>
<evidence type="ECO:0000250" key="1"/>
<evidence type="ECO:0000305" key="2"/>
<sequence>MIKNKKKKSYTSVYALGQYISMSAHKARRVIDQIRGRSYEEALMILELMPYRGCYPIFKLVYSAAANASHNKGLKETNLVISKAEVNQGNTVKKLKPRARGRSYPIKRSTCHITIVLEDTSLYQQYDEYLMYFKKPGCSNENKNLTCYDTYSSGGLWDKK</sequence>
<proteinExistence type="inferred from homology"/>